<proteinExistence type="inferred from homology"/>
<evidence type="ECO:0000255" key="1">
    <source>
        <dbReference type="HAMAP-Rule" id="MF_01219"/>
    </source>
</evidence>
<sequence length="173" mass="19608">MKTKEVVDELTVKRAITRITYEIIERNKDLNKIVLAGIKTRGVFIAHRIQERLKQLENLSVPVVELDTKPFRDDVKSGEDTSLVSVDVTDREVILVDDVLYTGRTIRAAIDNIVGHGRPARVSLAVLVDRGHRELPIRPDYVGKNIPTSRSEEIIVEMTELDDQDRVLITEEA</sequence>
<comment type="function">
    <text evidence="1">Regulates transcriptional attenuation of the pyrimidine nucleotide (pyr) operon by binding in a uridine-dependent manner to specific sites on pyr mRNA. This disrupts an antiterminator hairpin in the RNA and favors formation of a downstream transcription terminator, leading to a reduced expression of downstream genes.</text>
</comment>
<comment type="function">
    <text evidence="1">Also displays a weak uracil phosphoribosyltransferase activity which is not physiologically significant.</text>
</comment>
<comment type="catalytic activity">
    <reaction evidence="1">
        <text>UMP + diphosphate = 5-phospho-alpha-D-ribose 1-diphosphate + uracil</text>
        <dbReference type="Rhea" id="RHEA:13017"/>
        <dbReference type="ChEBI" id="CHEBI:17568"/>
        <dbReference type="ChEBI" id="CHEBI:33019"/>
        <dbReference type="ChEBI" id="CHEBI:57865"/>
        <dbReference type="ChEBI" id="CHEBI:58017"/>
        <dbReference type="EC" id="2.4.2.9"/>
    </reaction>
</comment>
<comment type="subunit">
    <text evidence="1">Homodimer and homohexamer; in equilibrium.</text>
</comment>
<comment type="similarity">
    <text evidence="1">Belongs to the purine/pyrimidine phosphoribosyltransferase family. PyrR subfamily.</text>
</comment>
<keyword id="KW-0328">Glycosyltransferase</keyword>
<keyword id="KW-0694">RNA-binding</keyword>
<keyword id="KW-0804">Transcription</keyword>
<keyword id="KW-0805">Transcription regulation</keyword>
<keyword id="KW-0806">Transcription termination</keyword>
<keyword id="KW-0808">Transferase</keyword>
<reference key="1">
    <citation type="journal article" date="2010" name="Genome Biol.">
        <title>Structure and dynamics of the pan-genome of Streptococcus pneumoniae and closely related species.</title>
        <authorList>
            <person name="Donati C."/>
            <person name="Hiller N.L."/>
            <person name="Tettelin H."/>
            <person name="Muzzi A."/>
            <person name="Croucher N.J."/>
            <person name="Angiuoli S.V."/>
            <person name="Oggioni M."/>
            <person name="Dunning Hotopp J.C."/>
            <person name="Hu F.Z."/>
            <person name="Riley D.R."/>
            <person name="Covacci A."/>
            <person name="Mitchell T.J."/>
            <person name="Bentley S.D."/>
            <person name="Kilian M."/>
            <person name="Ehrlich G.D."/>
            <person name="Rappuoli R."/>
            <person name="Moxon E.R."/>
            <person name="Masignani V."/>
        </authorList>
    </citation>
    <scope>NUCLEOTIDE SEQUENCE [LARGE SCALE GENOMIC DNA]</scope>
    <source>
        <strain>70585</strain>
    </source>
</reference>
<feature type="chain" id="PRO_1000164854" description="Bifunctional protein PyrR">
    <location>
        <begin position="1"/>
        <end position="173"/>
    </location>
</feature>
<feature type="short sequence motif" description="PRPP-binding" evidence="1">
    <location>
        <begin position="93"/>
        <end position="105"/>
    </location>
</feature>
<name>PYRR_STRP7</name>
<protein>
    <recommendedName>
        <fullName evidence="1">Bifunctional protein PyrR</fullName>
    </recommendedName>
    <domain>
        <recommendedName>
            <fullName evidence="1">Pyrimidine operon regulatory protein</fullName>
        </recommendedName>
    </domain>
    <domain>
        <recommendedName>
            <fullName evidence="1">Uracil phosphoribosyltransferase</fullName>
            <shortName evidence="1">UPRTase</shortName>
            <ecNumber evidence="1">2.4.2.9</ecNumber>
        </recommendedName>
    </domain>
</protein>
<gene>
    <name evidence="1" type="primary">pyrR</name>
    <name type="ordered locus">SP70585_1341</name>
</gene>
<dbReference type="EC" id="2.4.2.9" evidence="1"/>
<dbReference type="EMBL" id="CP000918">
    <property type="protein sequence ID" value="ACO17404.1"/>
    <property type="molecule type" value="Genomic_DNA"/>
</dbReference>
<dbReference type="RefSeq" id="WP_000850024.1">
    <property type="nucleotide sequence ID" value="NC_012468.1"/>
</dbReference>
<dbReference type="SMR" id="C1C7Q6"/>
<dbReference type="GeneID" id="45653435"/>
<dbReference type="KEGG" id="snm:SP70585_1341"/>
<dbReference type="HOGENOM" id="CLU_094234_2_1_9"/>
<dbReference type="Proteomes" id="UP000002211">
    <property type="component" value="Chromosome"/>
</dbReference>
<dbReference type="GO" id="GO:0003723">
    <property type="term" value="F:RNA binding"/>
    <property type="evidence" value="ECO:0007669"/>
    <property type="project" value="UniProtKB-UniRule"/>
</dbReference>
<dbReference type="GO" id="GO:0004845">
    <property type="term" value="F:uracil phosphoribosyltransferase activity"/>
    <property type="evidence" value="ECO:0007669"/>
    <property type="project" value="UniProtKB-UniRule"/>
</dbReference>
<dbReference type="GO" id="GO:0006353">
    <property type="term" value="P:DNA-templated transcription termination"/>
    <property type="evidence" value="ECO:0007669"/>
    <property type="project" value="UniProtKB-UniRule"/>
</dbReference>
<dbReference type="CDD" id="cd06223">
    <property type="entry name" value="PRTases_typeI"/>
    <property type="match status" value="1"/>
</dbReference>
<dbReference type="FunFam" id="3.40.50.2020:FF:000020">
    <property type="entry name" value="Bifunctional protein PyrR"/>
    <property type="match status" value="1"/>
</dbReference>
<dbReference type="Gene3D" id="3.40.50.2020">
    <property type="match status" value="1"/>
</dbReference>
<dbReference type="HAMAP" id="MF_01219">
    <property type="entry name" value="PyrR"/>
    <property type="match status" value="1"/>
</dbReference>
<dbReference type="InterPro" id="IPR000836">
    <property type="entry name" value="PRibTrfase_dom"/>
</dbReference>
<dbReference type="InterPro" id="IPR029057">
    <property type="entry name" value="PRTase-like"/>
</dbReference>
<dbReference type="InterPro" id="IPR023050">
    <property type="entry name" value="PyrR"/>
</dbReference>
<dbReference type="InterPro" id="IPR050137">
    <property type="entry name" value="PyrR_bifunctional"/>
</dbReference>
<dbReference type="NCBIfam" id="NF003548">
    <property type="entry name" value="PRK05205.1-4"/>
    <property type="match status" value="1"/>
</dbReference>
<dbReference type="NCBIfam" id="NF003549">
    <property type="entry name" value="PRK05205.1-5"/>
    <property type="match status" value="1"/>
</dbReference>
<dbReference type="PANTHER" id="PTHR11608">
    <property type="entry name" value="BIFUNCTIONAL PROTEIN PYRR"/>
    <property type="match status" value="1"/>
</dbReference>
<dbReference type="PANTHER" id="PTHR11608:SF0">
    <property type="entry name" value="BIFUNCTIONAL PROTEIN PYRR"/>
    <property type="match status" value="1"/>
</dbReference>
<dbReference type="Pfam" id="PF00156">
    <property type="entry name" value="Pribosyltran"/>
    <property type="match status" value="1"/>
</dbReference>
<dbReference type="SUPFAM" id="SSF53271">
    <property type="entry name" value="PRTase-like"/>
    <property type="match status" value="1"/>
</dbReference>
<organism>
    <name type="scientific">Streptococcus pneumoniae (strain 70585)</name>
    <dbReference type="NCBI Taxonomy" id="488221"/>
    <lineage>
        <taxon>Bacteria</taxon>
        <taxon>Bacillati</taxon>
        <taxon>Bacillota</taxon>
        <taxon>Bacilli</taxon>
        <taxon>Lactobacillales</taxon>
        <taxon>Streptococcaceae</taxon>
        <taxon>Streptococcus</taxon>
    </lineage>
</organism>
<accession>C1C7Q6</accession>